<feature type="chain" id="PRO_0000313580" description="C-type lectin domain family 12 member B">
    <location>
        <begin position="1"/>
        <end position="276"/>
    </location>
</feature>
<feature type="topological domain" description="Cytoplasmic" evidence="2">
    <location>
        <begin position="1"/>
        <end position="43"/>
    </location>
</feature>
<feature type="transmembrane region" description="Helical; Signal-anchor for type II membrane protein" evidence="2">
    <location>
        <begin position="44"/>
        <end position="64"/>
    </location>
</feature>
<feature type="topological domain" description="Extracellular" evidence="2">
    <location>
        <begin position="65"/>
        <end position="276"/>
    </location>
</feature>
<feature type="domain" description="C-type lectin" evidence="3">
    <location>
        <begin position="150"/>
        <end position="264"/>
    </location>
</feature>
<feature type="short sequence motif" description="ITIM motif" evidence="1">
    <location>
        <begin position="5"/>
        <end position="10"/>
    </location>
</feature>
<feature type="modified residue" description="Phosphotyrosine" evidence="1">
    <location>
        <position position="7"/>
    </location>
</feature>
<feature type="glycosylation site" description="N-linked (GlcNAc...) asparagine" evidence="2">
    <location>
        <position position="91"/>
    </location>
</feature>
<feature type="glycosylation site" description="N-linked (GlcNAc...) asparagine" evidence="2">
    <location>
        <position position="176"/>
    </location>
</feature>
<feature type="glycosylation site" description="N-linked (GlcNAc...) asparagine" evidence="2">
    <location>
        <position position="237"/>
    </location>
</feature>
<feature type="disulfide bond" evidence="3">
    <location>
        <begin position="172"/>
        <end position="263"/>
    </location>
</feature>
<feature type="disulfide bond" evidence="3">
    <location>
        <begin position="242"/>
        <end position="255"/>
    </location>
</feature>
<comment type="function">
    <text evidence="1">Inhibitory receptor postulated to negatively regulate immune and non-immune functions (By similarity). Upon phosphorylation, recruits SH2 domain-containing PTPN6 and PTPN11 phosphatases to its ITIM motif and antagonizes activation signals (By similarity). Although it inhibits KLRK1/NKG2D-mediated signaling, it does not bind known ligands of KLRK1/NKG2D and therefore is not its inhibitory counterpart (By similarity). May limit activation of myeloid cell subsets in response to infection or tissue inflammation (By similarity). May protect target cells against natural killer cell-mediated lysis (By similarity). May negatively regulate cell cycle and differentiation of melanocytes via inactivation of STAT3 (By similarity).</text>
</comment>
<comment type="subunit">
    <text evidence="1">Homodimer. Interacts (via ITIM motif) with PTPN6. Interacts (via ITIM motif) with PTPN11; this interaction triggers dephosphorylation and activation of PTPN11.</text>
</comment>
<comment type="subcellular location">
    <subcellularLocation>
        <location evidence="1">Cell membrane</location>
        <topology evidence="2">Single-pass type II membrane protein</topology>
    </subcellularLocation>
</comment>
<comment type="domain">
    <text evidence="1">Contains 1 copy of a cytoplasmic motif that is referred to as the immunoreceptor tyrosine-based inhibitor motif (ITIM). This motif is involved in modulation of cellular responses. The phosphorylated ITIM motif can bind the SH2 domain of several SH2-containing phosphatases.</text>
</comment>
<keyword id="KW-1003">Cell membrane</keyword>
<keyword id="KW-1015">Disulfide bond</keyword>
<keyword id="KW-0325">Glycoprotein</keyword>
<keyword id="KW-0430">Lectin</keyword>
<keyword id="KW-0472">Membrane</keyword>
<keyword id="KW-0597">Phosphoprotein</keyword>
<keyword id="KW-0675">Receptor</keyword>
<keyword id="KW-1185">Reference proteome</keyword>
<keyword id="KW-0735">Signal-anchor</keyword>
<keyword id="KW-0812">Transmembrane</keyword>
<keyword id="KW-1133">Transmembrane helix</keyword>
<sequence>MSEDMTYATLTFQDSVAAGNNQDRNNLRKRGYPAPSSIWRQAALGLLTLCVMLLIGLVTLGIMFLQMSSEINSDSDKLTQLQKIIHQQQDNISQQLSKYRNFPVEEEFLKSQISSLLKRQGQMAIKLCQELIIHTSDHKCNPCPKTWKWYQTSCYYFAVNEEKTWPNSRKNCMDKNSTLVKIDSLEEKDFLRSQPLPKFPFFWLGLSWDPSGRSWLWEDSSRPSPSLFSAYEYAQINESKGCAYFQNGNIYISRCSAEISWICEKTAALVKIEDLD</sequence>
<accession>Q2NL33</accession>
<organism>
    <name type="scientific">Bos taurus</name>
    <name type="common">Bovine</name>
    <dbReference type="NCBI Taxonomy" id="9913"/>
    <lineage>
        <taxon>Eukaryota</taxon>
        <taxon>Metazoa</taxon>
        <taxon>Chordata</taxon>
        <taxon>Craniata</taxon>
        <taxon>Vertebrata</taxon>
        <taxon>Euteleostomi</taxon>
        <taxon>Mammalia</taxon>
        <taxon>Eutheria</taxon>
        <taxon>Laurasiatheria</taxon>
        <taxon>Artiodactyla</taxon>
        <taxon>Ruminantia</taxon>
        <taxon>Pecora</taxon>
        <taxon>Bovidae</taxon>
        <taxon>Bovinae</taxon>
        <taxon>Bos</taxon>
    </lineage>
</organism>
<protein>
    <recommendedName>
        <fullName>C-type lectin domain family 12 member B</fullName>
    </recommendedName>
</protein>
<proteinExistence type="evidence at transcript level"/>
<evidence type="ECO:0000250" key="1">
    <source>
        <dbReference type="UniProtKB" id="Q2HXU8"/>
    </source>
</evidence>
<evidence type="ECO:0000255" key="2"/>
<evidence type="ECO:0000255" key="3">
    <source>
        <dbReference type="PROSITE-ProRule" id="PRU00040"/>
    </source>
</evidence>
<dbReference type="EMBL" id="BC111146">
    <property type="protein sequence ID" value="AAI11147.1"/>
    <property type="molecule type" value="mRNA"/>
</dbReference>
<dbReference type="RefSeq" id="NP_001069876.1">
    <property type="nucleotide sequence ID" value="NM_001076408.2"/>
</dbReference>
<dbReference type="SMR" id="Q2NL33"/>
<dbReference type="FunCoup" id="Q2NL33">
    <property type="interactions" value="6"/>
</dbReference>
<dbReference type="STRING" id="9913.ENSBTAP00000030514"/>
<dbReference type="GlyCosmos" id="Q2NL33">
    <property type="glycosylation" value="3 sites, No reported glycans"/>
</dbReference>
<dbReference type="GlyGen" id="Q2NL33">
    <property type="glycosylation" value="3 sites"/>
</dbReference>
<dbReference type="PaxDb" id="9913-ENSBTAP00000030514"/>
<dbReference type="GeneID" id="616085"/>
<dbReference type="KEGG" id="bta:616085"/>
<dbReference type="CTD" id="387837"/>
<dbReference type="eggNOG" id="KOG4297">
    <property type="taxonomic scope" value="Eukaryota"/>
</dbReference>
<dbReference type="InParanoid" id="Q2NL33"/>
<dbReference type="OrthoDB" id="6337382at2759"/>
<dbReference type="Proteomes" id="UP000009136">
    <property type="component" value="Unplaced"/>
</dbReference>
<dbReference type="GO" id="GO:0009897">
    <property type="term" value="C:external side of plasma membrane"/>
    <property type="evidence" value="ECO:0000318"/>
    <property type="project" value="GO_Central"/>
</dbReference>
<dbReference type="GO" id="GO:0030246">
    <property type="term" value="F:carbohydrate binding"/>
    <property type="evidence" value="ECO:0007669"/>
    <property type="project" value="UniProtKB-KW"/>
</dbReference>
<dbReference type="GO" id="GO:0019903">
    <property type="term" value="F:protein phosphatase binding"/>
    <property type="evidence" value="ECO:0000250"/>
    <property type="project" value="UniProtKB"/>
</dbReference>
<dbReference type="GO" id="GO:0030545">
    <property type="term" value="F:signaling receptor regulator activity"/>
    <property type="evidence" value="ECO:0007669"/>
    <property type="project" value="InterPro"/>
</dbReference>
<dbReference type="GO" id="GO:0097325">
    <property type="term" value="P:melanocyte proliferation"/>
    <property type="evidence" value="ECO:0000250"/>
    <property type="project" value="UniProtKB"/>
</dbReference>
<dbReference type="GO" id="GO:0002769">
    <property type="term" value="P:natural killer cell inhibitory signaling pathway"/>
    <property type="evidence" value="ECO:0000318"/>
    <property type="project" value="GO_Central"/>
</dbReference>
<dbReference type="GO" id="GO:1904893">
    <property type="term" value="P:negative regulation of receptor signaling pathway via STAT"/>
    <property type="evidence" value="ECO:0000250"/>
    <property type="project" value="UniProtKB"/>
</dbReference>
<dbReference type="CDD" id="cd03593">
    <property type="entry name" value="CLECT_NK_receptors_like"/>
    <property type="match status" value="1"/>
</dbReference>
<dbReference type="FunFam" id="3.10.100.10:FF:000119">
    <property type="entry name" value="C-type lectin domain family 12 member B"/>
    <property type="match status" value="1"/>
</dbReference>
<dbReference type="Gene3D" id="3.10.100.10">
    <property type="entry name" value="Mannose-Binding Protein A, subunit A"/>
    <property type="match status" value="1"/>
</dbReference>
<dbReference type="InterPro" id="IPR001304">
    <property type="entry name" value="C-type_lectin-like"/>
</dbReference>
<dbReference type="InterPro" id="IPR016186">
    <property type="entry name" value="C-type_lectin-like/link_sf"/>
</dbReference>
<dbReference type="InterPro" id="IPR042916">
    <property type="entry name" value="CLEC12A/B"/>
</dbReference>
<dbReference type="InterPro" id="IPR016187">
    <property type="entry name" value="CTDL_fold"/>
</dbReference>
<dbReference type="InterPro" id="IPR013600">
    <property type="entry name" value="Ly49_N"/>
</dbReference>
<dbReference type="InterPro" id="IPR033992">
    <property type="entry name" value="NKR-like_CTLD"/>
</dbReference>
<dbReference type="PANTHER" id="PTHR47647">
    <property type="entry name" value="C-TYPE LECTIN DOMAIN FAMILY 12 MEMBER B"/>
    <property type="match status" value="1"/>
</dbReference>
<dbReference type="PANTHER" id="PTHR47647:SF1">
    <property type="entry name" value="C-TYPE LECTIN DOMAIN FAMILY 12 MEMBER B"/>
    <property type="match status" value="1"/>
</dbReference>
<dbReference type="Pfam" id="PF00059">
    <property type="entry name" value="Lectin_C"/>
    <property type="match status" value="1"/>
</dbReference>
<dbReference type="Pfam" id="PF08391">
    <property type="entry name" value="Ly49"/>
    <property type="match status" value="1"/>
</dbReference>
<dbReference type="SMART" id="SM00034">
    <property type="entry name" value="CLECT"/>
    <property type="match status" value="1"/>
</dbReference>
<dbReference type="SUPFAM" id="SSF56436">
    <property type="entry name" value="C-type lectin-like"/>
    <property type="match status" value="1"/>
</dbReference>
<dbReference type="PROSITE" id="PS50041">
    <property type="entry name" value="C_TYPE_LECTIN_2"/>
    <property type="match status" value="1"/>
</dbReference>
<name>CL12B_BOVIN</name>
<reference key="1">
    <citation type="submission" date="2005-12" db="EMBL/GenBank/DDBJ databases">
        <authorList>
            <consortium name="NIH - Mammalian Gene Collection (MGC) project"/>
        </authorList>
    </citation>
    <scope>NUCLEOTIDE SEQUENCE [LARGE SCALE MRNA]</scope>
    <source>
        <strain>Crossbred X Angus</strain>
        <tissue>Liver</tissue>
    </source>
</reference>
<gene>
    <name type="primary">CLEC12B</name>
</gene>